<accession>P40798</accession>
<accession>Q8IP49</accession>
<accession>Q9VJQ1</accession>
<accession>Q9Y0Z5</accession>
<feature type="chain" id="PRO_0000056190" description="Protein shuttle craft">
    <location>
        <begin position="1"/>
        <end position="1106"/>
    </location>
</feature>
<feature type="domain" description="R3H" evidence="2">
    <location>
        <begin position="1006"/>
        <end position="1071"/>
    </location>
</feature>
<feature type="zinc finger region" description="RING-type; atypical" evidence="1">
    <location>
        <begin position="386"/>
        <end position="433"/>
    </location>
</feature>
<feature type="zinc finger region" description="NF-X1-type 1">
    <location>
        <begin position="474"/>
        <end position="492"/>
    </location>
</feature>
<feature type="zinc finger region" description="NF-X1-type 2">
    <location>
        <begin position="527"/>
        <end position="546"/>
    </location>
</feature>
<feature type="zinc finger region" description="NF-X1-type 3">
    <location>
        <begin position="585"/>
        <end position="604"/>
    </location>
</feature>
<feature type="zinc finger region" description="NF-X1-type 4">
    <location>
        <begin position="644"/>
        <end position="667"/>
    </location>
</feature>
<feature type="zinc finger region" description="NF-X1-type 5">
    <location>
        <begin position="706"/>
        <end position="725"/>
    </location>
</feature>
<feature type="zinc finger region" description="NF-X1-type 6">
    <location>
        <begin position="733"/>
        <end position="752"/>
    </location>
</feature>
<feature type="zinc finger region" description="NF-X1-type 7">
    <location>
        <begin position="844"/>
        <end position="867"/>
    </location>
</feature>
<feature type="zinc finger region" description="NF-X1-type 8">
    <location>
        <begin position="876"/>
        <end position="896"/>
    </location>
</feature>
<feature type="region of interest" description="Disordered" evidence="3">
    <location>
        <begin position="7"/>
        <end position="26"/>
    </location>
</feature>
<feature type="region of interest" description="Disordered" evidence="3">
    <location>
        <begin position="189"/>
        <end position="371"/>
    </location>
</feature>
<feature type="compositionally biased region" description="Low complexity" evidence="3">
    <location>
        <begin position="189"/>
        <end position="201"/>
    </location>
</feature>
<feature type="compositionally biased region" description="Basic and acidic residues" evidence="3">
    <location>
        <begin position="232"/>
        <end position="270"/>
    </location>
</feature>
<feature type="compositionally biased region" description="Basic and acidic residues" evidence="3">
    <location>
        <begin position="278"/>
        <end position="323"/>
    </location>
</feature>
<feature type="compositionally biased region" description="Polar residues" evidence="3">
    <location>
        <begin position="336"/>
        <end position="354"/>
    </location>
</feature>
<feature type="modified residue" description="Phosphothreonine" evidence="4">
    <location>
        <position position="335"/>
    </location>
</feature>
<feature type="modified residue" description="Phosphoserine" evidence="4">
    <location>
        <position position="336"/>
    </location>
</feature>
<feature type="modified residue" description="Phosphoserine" evidence="4">
    <location>
        <position position="339"/>
    </location>
</feature>
<feature type="modified residue" description="Phosphoserine" evidence="4">
    <location>
        <position position="343"/>
    </location>
</feature>
<feature type="modified residue" description="Phosphoserine" evidence="4">
    <location>
        <position position="354"/>
    </location>
</feature>
<feature type="splice variant" id="VSP_005757" description="In isoform B." evidence="5">
    <location>
        <begin position="109"/>
        <end position="115"/>
    </location>
</feature>
<feature type="sequence conflict" description="In Ref. 1; AAB60255." evidence="6" ref="1">
    <original>A</original>
    <variation>P</variation>
    <location>
        <position position="12"/>
    </location>
</feature>
<feature type="sequence conflict" description="In Ref. 1; AAB60255." evidence="6" ref="1">
    <original>A</original>
    <variation>V</variation>
    <location>
        <position position="25"/>
    </location>
</feature>
<feature type="sequence conflict" description="In Ref. 1; AAB60255." evidence="6" ref="1">
    <original>M</original>
    <variation>I</variation>
    <location>
        <position position="617"/>
    </location>
</feature>
<feature type="sequence conflict" description="In Ref. 1; AAB60255." evidence="6" ref="1">
    <original>C</original>
    <variation>S</variation>
    <location>
        <position position="784"/>
    </location>
</feature>
<feature type="sequence conflict" description="In Ref. 1; AAB60255." evidence="6" ref="1">
    <original>EL</original>
    <variation>DW</variation>
    <location>
        <begin position="820"/>
        <end position="821"/>
    </location>
</feature>
<organism>
    <name type="scientific">Drosophila melanogaster</name>
    <name type="common">Fruit fly</name>
    <dbReference type="NCBI Taxonomy" id="7227"/>
    <lineage>
        <taxon>Eukaryota</taxon>
        <taxon>Metazoa</taxon>
        <taxon>Ecdysozoa</taxon>
        <taxon>Arthropoda</taxon>
        <taxon>Hexapoda</taxon>
        <taxon>Insecta</taxon>
        <taxon>Pterygota</taxon>
        <taxon>Neoptera</taxon>
        <taxon>Endopterygota</taxon>
        <taxon>Diptera</taxon>
        <taxon>Brachycera</taxon>
        <taxon>Muscomorpha</taxon>
        <taxon>Ephydroidea</taxon>
        <taxon>Drosophilidae</taxon>
        <taxon>Drosophila</taxon>
        <taxon>Sophophora</taxon>
    </lineage>
</organism>
<protein>
    <recommendedName>
        <fullName>Protein shuttle craft</fullName>
    </recommendedName>
</protein>
<gene>
    <name type="primary">stc</name>
    <name type="ORF">CG3647</name>
</gene>
<name>STC_DROME</name>
<comment type="function">
    <text>Plays an essential role during the late stages of embryonic neurogenesis. May either fine-tune the guidance or the spatial maintenance of the migrating SNB and in nerve roots, which are composed of axons originating from distinct groups of motor neurons and may be required to either guide or maintain the position of these nerves along a direct and straight path to their ultimate targets in particular muscle fields. May play a role in egg chamber development and/or may confer essential maternal contributions to the early embryo.</text>
</comment>
<comment type="subcellular location">
    <subcellularLocation>
        <location>Nucleus</location>
    </subcellularLocation>
</comment>
<comment type="alternative products">
    <event type="alternative splicing"/>
    <isoform>
        <id>P40798-1</id>
        <name>A</name>
        <sequence type="displayed"/>
    </isoform>
    <isoform>
        <id>P40798-2</id>
        <name>B</name>
        <sequence type="described" ref="VSP_005757"/>
    </isoform>
</comment>
<comment type="tissue specificity">
    <text>Ovaries and embryonic central nervous system.</text>
</comment>
<comment type="developmental stage">
    <text>Major expression is seen in the ovaries while moderate levels of expression are observed during embryogenesis and throughout subsequent stages of fly development.</text>
</comment>
<comment type="similarity">
    <text evidence="6">Belongs to the NFX1 family.</text>
</comment>
<reference key="1">
    <citation type="journal article" date="1996" name="Mol. Cell. Biol.">
        <title>A homolog of human transcription factor NF-X1 encoded by the Drosophila shuttle craft gene is required in the embryonic central nervous system.</title>
        <authorList>
            <person name="Stroumbakis N.D."/>
            <person name="Li Z."/>
            <person name="Tolias P.P."/>
        </authorList>
    </citation>
    <scope>NUCLEOTIDE SEQUENCE [MRNA] (ISOFORMS A AND B)</scope>
    <source>
        <tissue>Ovary</tissue>
    </source>
</reference>
<reference key="2">
    <citation type="journal article" date="1999" name="Genetics">
        <title>An exploration of the sequence of a 2.9-Mb region of the genome of Drosophila melanogaster: the Adh region.</title>
        <authorList>
            <person name="Ashburner M."/>
            <person name="Misra S."/>
            <person name="Roote J."/>
            <person name="Lewis S.E."/>
            <person name="Blazej R.G."/>
            <person name="Davis T."/>
            <person name="Doyle C."/>
            <person name="Galle R.F."/>
            <person name="George R.A."/>
            <person name="Harris N.L."/>
            <person name="Hartzell G."/>
            <person name="Harvey D.A."/>
            <person name="Hong L."/>
            <person name="Houston K.A."/>
            <person name="Hoskins R.A."/>
            <person name="Johnson G."/>
            <person name="Martin C."/>
            <person name="Moshrefi A.R."/>
            <person name="Palazzolo M."/>
            <person name="Reese M.G."/>
            <person name="Spradling A.C."/>
            <person name="Tsang G."/>
            <person name="Wan K.H."/>
            <person name="Whitelaw K."/>
            <person name="Celniker S.E."/>
            <person name="Rubin G.M."/>
        </authorList>
    </citation>
    <scope>NUCLEOTIDE SEQUENCE [LARGE SCALE GENOMIC DNA]</scope>
    <source>
        <strain>Berkeley</strain>
    </source>
</reference>
<reference key="3">
    <citation type="journal article" date="2000" name="Science">
        <title>The genome sequence of Drosophila melanogaster.</title>
        <authorList>
            <person name="Adams M.D."/>
            <person name="Celniker S.E."/>
            <person name="Holt R.A."/>
            <person name="Evans C.A."/>
            <person name="Gocayne J.D."/>
            <person name="Amanatides P.G."/>
            <person name="Scherer S.E."/>
            <person name="Li P.W."/>
            <person name="Hoskins R.A."/>
            <person name="Galle R.F."/>
            <person name="George R.A."/>
            <person name="Lewis S.E."/>
            <person name="Richards S."/>
            <person name="Ashburner M."/>
            <person name="Henderson S.N."/>
            <person name="Sutton G.G."/>
            <person name="Wortman J.R."/>
            <person name="Yandell M.D."/>
            <person name="Zhang Q."/>
            <person name="Chen L.X."/>
            <person name="Brandon R.C."/>
            <person name="Rogers Y.-H.C."/>
            <person name="Blazej R.G."/>
            <person name="Champe M."/>
            <person name="Pfeiffer B.D."/>
            <person name="Wan K.H."/>
            <person name="Doyle C."/>
            <person name="Baxter E.G."/>
            <person name="Helt G."/>
            <person name="Nelson C.R."/>
            <person name="Miklos G.L.G."/>
            <person name="Abril J.F."/>
            <person name="Agbayani A."/>
            <person name="An H.-J."/>
            <person name="Andrews-Pfannkoch C."/>
            <person name="Baldwin D."/>
            <person name="Ballew R.M."/>
            <person name="Basu A."/>
            <person name="Baxendale J."/>
            <person name="Bayraktaroglu L."/>
            <person name="Beasley E.M."/>
            <person name="Beeson K.Y."/>
            <person name="Benos P.V."/>
            <person name="Berman B.P."/>
            <person name="Bhandari D."/>
            <person name="Bolshakov S."/>
            <person name="Borkova D."/>
            <person name="Botchan M.R."/>
            <person name="Bouck J."/>
            <person name="Brokstein P."/>
            <person name="Brottier P."/>
            <person name="Burtis K.C."/>
            <person name="Busam D.A."/>
            <person name="Butler H."/>
            <person name="Cadieu E."/>
            <person name="Center A."/>
            <person name="Chandra I."/>
            <person name="Cherry J.M."/>
            <person name="Cawley S."/>
            <person name="Dahlke C."/>
            <person name="Davenport L.B."/>
            <person name="Davies P."/>
            <person name="de Pablos B."/>
            <person name="Delcher A."/>
            <person name="Deng Z."/>
            <person name="Mays A.D."/>
            <person name="Dew I."/>
            <person name="Dietz S.M."/>
            <person name="Dodson K."/>
            <person name="Doup L.E."/>
            <person name="Downes M."/>
            <person name="Dugan-Rocha S."/>
            <person name="Dunkov B.C."/>
            <person name="Dunn P."/>
            <person name="Durbin K.J."/>
            <person name="Evangelista C.C."/>
            <person name="Ferraz C."/>
            <person name="Ferriera S."/>
            <person name="Fleischmann W."/>
            <person name="Fosler C."/>
            <person name="Gabrielian A.E."/>
            <person name="Garg N.S."/>
            <person name="Gelbart W.M."/>
            <person name="Glasser K."/>
            <person name="Glodek A."/>
            <person name="Gong F."/>
            <person name="Gorrell J.H."/>
            <person name="Gu Z."/>
            <person name="Guan P."/>
            <person name="Harris M."/>
            <person name="Harris N.L."/>
            <person name="Harvey D.A."/>
            <person name="Heiman T.J."/>
            <person name="Hernandez J.R."/>
            <person name="Houck J."/>
            <person name="Hostin D."/>
            <person name="Houston K.A."/>
            <person name="Howland T.J."/>
            <person name="Wei M.-H."/>
            <person name="Ibegwam C."/>
            <person name="Jalali M."/>
            <person name="Kalush F."/>
            <person name="Karpen G.H."/>
            <person name="Ke Z."/>
            <person name="Kennison J.A."/>
            <person name="Ketchum K.A."/>
            <person name="Kimmel B.E."/>
            <person name="Kodira C.D."/>
            <person name="Kraft C.L."/>
            <person name="Kravitz S."/>
            <person name="Kulp D."/>
            <person name="Lai Z."/>
            <person name="Lasko P."/>
            <person name="Lei Y."/>
            <person name="Levitsky A.A."/>
            <person name="Li J.H."/>
            <person name="Li Z."/>
            <person name="Liang Y."/>
            <person name="Lin X."/>
            <person name="Liu X."/>
            <person name="Mattei B."/>
            <person name="McIntosh T.C."/>
            <person name="McLeod M.P."/>
            <person name="McPherson D."/>
            <person name="Merkulov G."/>
            <person name="Milshina N.V."/>
            <person name="Mobarry C."/>
            <person name="Morris J."/>
            <person name="Moshrefi A."/>
            <person name="Mount S.M."/>
            <person name="Moy M."/>
            <person name="Murphy B."/>
            <person name="Murphy L."/>
            <person name="Muzny D.M."/>
            <person name="Nelson D.L."/>
            <person name="Nelson D.R."/>
            <person name="Nelson K.A."/>
            <person name="Nixon K."/>
            <person name="Nusskern D.R."/>
            <person name="Pacleb J.M."/>
            <person name="Palazzolo M."/>
            <person name="Pittman G.S."/>
            <person name="Pan S."/>
            <person name="Pollard J."/>
            <person name="Puri V."/>
            <person name="Reese M.G."/>
            <person name="Reinert K."/>
            <person name="Remington K."/>
            <person name="Saunders R.D.C."/>
            <person name="Scheeler F."/>
            <person name="Shen H."/>
            <person name="Shue B.C."/>
            <person name="Siden-Kiamos I."/>
            <person name="Simpson M."/>
            <person name="Skupski M.P."/>
            <person name="Smith T.J."/>
            <person name="Spier E."/>
            <person name="Spradling A.C."/>
            <person name="Stapleton M."/>
            <person name="Strong R."/>
            <person name="Sun E."/>
            <person name="Svirskas R."/>
            <person name="Tector C."/>
            <person name="Turner R."/>
            <person name="Venter E."/>
            <person name="Wang A.H."/>
            <person name="Wang X."/>
            <person name="Wang Z.-Y."/>
            <person name="Wassarman D.A."/>
            <person name="Weinstock G.M."/>
            <person name="Weissenbach J."/>
            <person name="Williams S.M."/>
            <person name="Woodage T."/>
            <person name="Worley K.C."/>
            <person name="Wu D."/>
            <person name="Yang S."/>
            <person name="Yao Q.A."/>
            <person name="Ye J."/>
            <person name="Yeh R.-F."/>
            <person name="Zaveri J.S."/>
            <person name="Zhan M."/>
            <person name="Zhang G."/>
            <person name="Zhao Q."/>
            <person name="Zheng L."/>
            <person name="Zheng X.H."/>
            <person name="Zhong F.N."/>
            <person name="Zhong W."/>
            <person name="Zhou X."/>
            <person name="Zhu S.C."/>
            <person name="Zhu X."/>
            <person name="Smith H.O."/>
            <person name="Gibbs R.A."/>
            <person name="Myers E.W."/>
            <person name="Rubin G.M."/>
            <person name="Venter J.C."/>
        </authorList>
    </citation>
    <scope>NUCLEOTIDE SEQUENCE [LARGE SCALE GENOMIC DNA]</scope>
    <source>
        <strain>Berkeley</strain>
    </source>
</reference>
<reference key="4">
    <citation type="journal article" date="2002" name="Genome Biol.">
        <title>Annotation of the Drosophila melanogaster euchromatic genome: a systematic review.</title>
        <authorList>
            <person name="Misra S."/>
            <person name="Crosby M.A."/>
            <person name="Mungall C.J."/>
            <person name="Matthews B.B."/>
            <person name="Campbell K.S."/>
            <person name="Hradecky P."/>
            <person name="Huang Y."/>
            <person name="Kaminker J.S."/>
            <person name="Millburn G.H."/>
            <person name="Prochnik S.E."/>
            <person name="Smith C.D."/>
            <person name="Tupy J.L."/>
            <person name="Whitfield E.J."/>
            <person name="Bayraktaroglu L."/>
            <person name="Berman B.P."/>
            <person name="Bettencourt B.R."/>
            <person name="Celniker S.E."/>
            <person name="de Grey A.D.N.J."/>
            <person name="Drysdale R.A."/>
            <person name="Harris N.L."/>
            <person name="Richter J."/>
            <person name="Russo S."/>
            <person name="Schroeder A.J."/>
            <person name="Shu S.Q."/>
            <person name="Stapleton M."/>
            <person name="Yamada C."/>
            <person name="Ashburner M."/>
            <person name="Gelbart W.M."/>
            <person name="Rubin G.M."/>
            <person name="Lewis S.E."/>
        </authorList>
    </citation>
    <scope>GENOME REANNOTATION</scope>
    <scope>ALTERNATIVE SPLICING</scope>
    <source>
        <strain>Berkeley</strain>
    </source>
</reference>
<reference key="5">
    <citation type="journal article" date="2000" name="Science">
        <title>A Drosophila complementary DNA resource.</title>
        <authorList>
            <person name="Rubin G.M."/>
            <person name="Hong L."/>
            <person name="Brokstein P."/>
            <person name="Evans-Holm M."/>
            <person name="Frise E."/>
            <person name="Stapleton M."/>
            <person name="Harvey D.A."/>
        </authorList>
    </citation>
    <scope>NUCLEOTIDE SEQUENCE [LARGE SCALE MRNA] (ISOFORM A)</scope>
    <source>
        <strain>Berkeley</strain>
        <tissue>Embryo</tissue>
    </source>
</reference>
<reference key="6">
    <citation type="journal article" date="2008" name="J. Proteome Res.">
        <title>Phosphoproteome analysis of Drosophila melanogaster embryos.</title>
        <authorList>
            <person name="Zhai B."/>
            <person name="Villen J."/>
            <person name="Beausoleil S.A."/>
            <person name="Mintseris J."/>
            <person name="Gygi S.P."/>
        </authorList>
    </citation>
    <scope>PHOSPHORYLATION [LARGE SCALE ANALYSIS] AT THR-335; SER-336; SER-339; SER-343 AND SER-354</scope>
    <scope>IDENTIFICATION BY MASS SPECTROMETRY</scope>
    <source>
        <tissue>Embryo</tissue>
    </source>
</reference>
<dbReference type="EMBL" id="U09306">
    <property type="protein sequence ID" value="AAB60255.1"/>
    <property type="molecule type" value="mRNA"/>
</dbReference>
<dbReference type="EMBL" id="AE014134">
    <property type="protein sequence ID" value="AAF53441.2"/>
    <property type="molecule type" value="Genomic_DNA"/>
</dbReference>
<dbReference type="EMBL" id="AE014134">
    <property type="protein sequence ID" value="AAN10891.1"/>
    <property type="molecule type" value="Genomic_DNA"/>
</dbReference>
<dbReference type="EMBL" id="AF145679">
    <property type="protein sequence ID" value="AAD38654.1"/>
    <property type="molecule type" value="mRNA"/>
</dbReference>
<dbReference type="PIR" id="T13938">
    <property type="entry name" value="T13938"/>
</dbReference>
<dbReference type="PIR" id="T44598">
    <property type="entry name" value="T44598"/>
</dbReference>
<dbReference type="RefSeq" id="NP_476598.1">
    <molecule id="P40798-2"/>
    <property type="nucleotide sequence ID" value="NM_057250.4"/>
</dbReference>
<dbReference type="RefSeq" id="NP_476599.1">
    <molecule id="P40798-1"/>
    <property type="nucleotide sequence ID" value="NM_057251.4"/>
</dbReference>
<dbReference type="SMR" id="P40798"/>
<dbReference type="BioGRID" id="60906">
    <property type="interactions" value="25"/>
</dbReference>
<dbReference type="FunCoup" id="P40798">
    <property type="interactions" value="2963"/>
</dbReference>
<dbReference type="IntAct" id="P40798">
    <property type="interactions" value="3"/>
</dbReference>
<dbReference type="STRING" id="7227.FBpp0080265"/>
<dbReference type="iPTMnet" id="P40798"/>
<dbReference type="PaxDb" id="7227-FBpp0080265"/>
<dbReference type="DNASU" id="34888"/>
<dbReference type="EnsemblMetazoa" id="FBtr0080705">
    <molecule id="P40798-1"/>
    <property type="protein sequence ID" value="FBpp0080265"/>
    <property type="gene ID" value="FBgn0001978"/>
</dbReference>
<dbReference type="EnsemblMetazoa" id="FBtr0080706">
    <molecule id="P40798-2"/>
    <property type="protein sequence ID" value="FBpp0080266"/>
    <property type="gene ID" value="FBgn0001978"/>
</dbReference>
<dbReference type="GeneID" id="34888"/>
<dbReference type="KEGG" id="dme:Dmel_CG3647"/>
<dbReference type="AGR" id="FB:FBgn0001978"/>
<dbReference type="CTD" id="34888"/>
<dbReference type="FlyBase" id="FBgn0001978">
    <property type="gene designation" value="stc"/>
</dbReference>
<dbReference type="VEuPathDB" id="VectorBase:FBgn0001978"/>
<dbReference type="eggNOG" id="KOG1952">
    <property type="taxonomic scope" value="Eukaryota"/>
</dbReference>
<dbReference type="GeneTree" id="ENSGT00940000156325"/>
<dbReference type="InParanoid" id="P40798"/>
<dbReference type="OMA" id="KCAAVCH"/>
<dbReference type="OrthoDB" id="6512771at2759"/>
<dbReference type="PhylomeDB" id="P40798"/>
<dbReference type="SignaLink" id="P40798"/>
<dbReference type="BioGRID-ORCS" id="34888">
    <property type="hits" value="0 hits in 1 CRISPR screen"/>
</dbReference>
<dbReference type="GenomeRNAi" id="34888"/>
<dbReference type="PRO" id="PR:P40798"/>
<dbReference type="Proteomes" id="UP000000803">
    <property type="component" value="Chromosome 2L"/>
</dbReference>
<dbReference type="Bgee" id="FBgn0001978">
    <property type="expression patterns" value="Expressed in egg chamber and 133 other cell types or tissues"/>
</dbReference>
<dbReference type="ExpressionAtlas" id="P40798">
    <property type="expression patterns" value="baseline and differential"/>
</dbReference>
<dbReference type="GO" id="GO:0005634">
    <property type="term" value="C:nucleus"/>
    <property type="evidence" value="ECO:0000314"/>
    <property type="project" value="FlyBase"/>
</dbReference>
<dbReference type="GO" id="GO:0003700">
    <property type="term" value="F:DNA-binding transcription factor activity"/>
    <property type="evidence" value="ECO:0000250"/>
    <property type="project" value="FlyBase"/>
</dbReference>
<dbReference type="GO" id="GO:0000981">
    <property type="term" value="F:DNA-binding transcription factor activity, RNA polymerase II-specific"/>
    <property type="evidence" value="ECO:0000318"/>
    <property type="project" value="GO_Central"/>
</dbReference>
<dbReference type="GO" id="GO:0003723">
    <property type="term" value="F:RNA binding"/>
    <property type="evidence" value="ECO:0007669"/>
    <property type="project" value="UniProtKB-KW"/>
</dbReference>
<dbReference type="GO" id="GO:0000977">
    <property type="term" value="F:RNA polymerase II transcription regulatory region sequence-specific DNA binding"/>
    <property type="evidence" value="ECO:0000318"/>
    <property type="project" value="GO_Central"/>
</dbReference>
<dbReference type="GO" id="GO:0061630">
    <property type="term" value="F:ubiquitin protein ligase activity"/>
    <property type="evidence" value="ECO:0000250"/>
    <property type="project" value="FlyBase"/>
</dbReference>
<dbReference type="GO" id="GO:0008270">
    <property type="term" value="F:zinc ion binding"/>
    <property type="evidence" value="ECO:0000255"/>
    <property type="project" value="FlyBase"/>
</dbReference>
<dbReference type="GO" id="GO:0000122">
    <property type="term" value="P:negative regulation of transcription by RNA polymerase II"/>
    <property type="evidence" value="ECO:0000318"/>
    <property type="project" value="GO_Central"/>
</dbReference>
<dbReference type="GO" id="GO:0051865">
    <property type="term" value="P:protein autoubiquitination"/>
    <property type="evidence" value="ECO:0000250"/>
    <property type="project" value="FlyBase"/>
</dbReference>
<dbReference type="CDD" id="cd06008">
    <property type="entry name" value="NF-X1-zinc-finger"/>
    <property type="match status" value="7"/>
</dbReference>
<dbReference type="CDD" id="cd02643">
    <property type="entry name" value="R3H_NF-X1"/>
    <property type="match status" value="1"/>
</dbReference>
<dbReference type="FunFam" id="3.30.1370.50:FF:000010">
    <property type="entry name" value="Shuttle craft, isoform D"/>
    <property type="match status" value="1"/>
</dbReference>
<dbReference type="Gene3D" id="3.30.1370.50">
    <property type="entry name" value="R3H-like domain"/>
    <property type="match status" value="1"/>
</dbReference>
<dbReference type="InterPro" id="IPR034078">
    <property type="entry name" value="NFX1_fam"/>
</dbReference>
<dbReference type="InterPro" id="IPR001374">
    <property type="entry name" value="R3H_dom"/>
</dbReference>
<dbReference type="InterPro" id="IPR036867">
    <property type="entry name" value="R3H_dom_sf"/>
</dbReference>
<dbReference type="InterPro" id="IPR034076">
    <property type="entry name" value="R3H_NF-X1"/>
</dbReference>
<dbReference type="InterPro" id="IPR000967">
    <property type="entry name" value="Znf_NFX1"/>
</dbReference>
<dbReference type="InterPro" id="IPR001841">
    <property type="entry name" value="Znf_RING"/>
</dbReference>
<dbReference type="PANTHER" id="PTHR12360">
    <property type="entry name" value="NUCLEAR TRANSCRIPTION FACTOR, X-BOX BINDING 1 NFX1"/>
    <property type="match status" value="1"/>
</dbReference>
<dbReference type="PANTHER" id="PTHR12360:SF12">
    <property type="entry name" value="TRANSCRIPTIONAL REPRESSOR NF-X1"/>
    <property type="match status" value="1"/>
</dbReference>
<dbReference type="Pfam" id="PF01424">
    <property type="entry name" value="R3H"/>
    <property type="match status" value="1"/>
</dbReference>
<dbReference type="Pfam" id="PF01422">
    <property type="entry name" value="zf-NF-X1"/>
    <property type="match status" value="7"/>
</dbReference>
<dbReference type="SMART" id="SM00393">
    <property type="entry name" value="R3H"/>
    <property type="match status" value="1"/>
</dbReference>
<dbReference type="SMART" id="SM00438">
    <property type="entry name" value="ZnF_NFX"/>
    <property type="match status" value="9"/>
</dbReference>
<dbReference type="SUPFAM" id="SSF82708">
    <property type="entry name" value="R3H domain"/>
    <property type="match status" value="1"/>
</dbReference>
<dbReference type="SUPFAM" id="SSF57850">
    <property type="entry name" value="RING/U-box"/>
    <property type="match status" value="1"/>
</dbReference>
<dbReference type="PROSITE" id="PS51061">
    <property type="entry name" value="R3H"/>
    <property type="match status" value="1"/>
</dbReference>
<dbReference type="PROSITE" id="PS50089">
    <property type="entry name" value="ZF_RING_2"/>
    <property type="match status" value="1"/>
</dbReference>
<keyword id="KW-0025">Alternative splicing</keyword>
<keyword id="KW-0238">DNA-binding</keyword>
<keyword id="KW-0479">Metal-binding</keyword>
<keyword id="KW-0539">Nucleus</keyword>
<keyword id="KW-0597">Phosphoprotein</keyword>
<keyword id="KW-1185">Reference proteome</keyword>
<keyword id="KW-0677">Repeat</keyword>
<keyword id="KW-0694">RNA-binding</keyword>
<keyword id="KW-0804">Transcription</keyword>
<keyword id="KW-0805">Transcription regulation</keyword>
<keyword id="KW-0862">Zinc</keyword>
<keyword id="KW-0863">Zinc-finger</keyword>
<sequence>MAEYWQQLTNGAGEAGPGNESSAMADCNGGHESAAVGGSCNRHSNNNYVNFNQFIMQHNLGGGAPSNATSTMQHPVGSSYTNFSLGGGGGAFGLNPPVASASTSHFANVSHQSPNFYSQAMIPTYQNGDGIARVTVTSSYGSVNPSNSNFSSFYTPFGNNPFDFSASKLQASAPEFVPNFAKLSLEETPAAATTNGNSTASLETAINETRPRTLRAQEPAERGANNQCSNHNYERERERERDRDRDRERDRDRDRDRDRDRDRDRDRDSRPGNTRQQRRSDYRDDREDRYERSDRRRPQKQQRYDNHRSNKRRDDWNRNRDRINGFPRAVDDLDTSNESAHPSPEKQSQLQQISPRRGPPLPPADNEKLSQREKLVRDIEQRRLECLVCVEAIKSHQPTWSCRNCYHMLHLKCTITWASSSKSEVGWRCPACQNVLQDLPRDYLCFCGKLKNPPVSRTELAHSCGEVCCRIEGCSHACTLLCHPGPCPPCQANVVRSCGCGRSTKTMQCAMKEEVLCGEICDKLLNCGEHRCQAECHSGKCAACSEQVVQQCHCGKQERKVPCTRESQDKRTYSCKDSCGQPLPCGHHKCKDSCHAGSCRPCKLSPEQITSCPCGKMPVPAGQRSSCLDPIPTCEGICSRTLRCGKPAHPHQCGSKCHLGQCPPCPKQTGVKCRCGHMDQMIKCRQLCNRADDARCKRRCTKKRSCGKHKCNVECCIDIDHDCPLPCNRTLSCGKHKCDQPCHRGNCPPCYRSSFEELYCECGAEVIYPPVPCGTKKPICKLPCSRIHPCDHPPQHNCHSGPTCPPCMIFTTKLCHGNHELRKTIPCSQPNFSCGMACGKPLPCGGHKCIKPCHEGPCQSAGEICRQSCTKPRPTCGHKCAAACHEGACPETPCKELVEVQCECGNRKQNRSCQELAREHSRIATIQLASSMAEMSRGNYMELSEILAPAKKSNKTLDCNDECRLLERNRRLAAALSSGNSDTKQKCLTKYSEFVRGFAKKNPALTKSVYETLTDLVKLAKESKQRSRSHSFPTMNREKRQLVHELCEVFGIESVSYDKEPNRNVVATAHKDRCWFPATSIMEVLARESGQRRVPVPSNNAWGLKK</sequence>
<evidence type="ECO:0000255" key="1">
    <source>
        <dbReference type="PROSITE-ProRule" id="PRU00175"/>
    </source>
</evidence>
<evidence type="ECO:0000255" key="2">
    <source>
        <dbReference type="PROSITE-ProRule" id="PRU00382"/>
    </source>
</evidence>
<evidence type="ECO:0000256" key="3">
    <source>
        <dbReference type="SAM" id="MobiDB-lite"/>
    </source>
</evidence>
<evidence type="ECO:0000269" key="4">
    <source>
    </source>
</evidence>
<evidence type="ECO:0000303" key="5">
    <source>
    </source>
</evidence>
<evidence type="ECO:0000305" key="6"/>
<proteinExistence type="evidence at protein level"/>